<comment type="subcellular location">
    <subcellularLocation>
        <location evidence="2">Cytoplasm</location>
    </subcellularLocation>
    <subcellularLocation>
        <location evidence="2">Nucleus</location>
    </subcellularLocation>
</comment>
<gene>
    <name type="ORF">SPBC428.12c</name>
</gene>
<name>YHOC_SCHPO</name>
<proteinExistence type="predicted"/>
<organism>
    <name type="scientific">Schizosaccharomyces pombe (strain 972 / ATCC 24843)</name>
    <name type="common">Fission yeast</name>
    <dbReference type="NCBI Taxonomy" id="284812"/>
    <lineage>
        <taxon>Eukaryota</taxon>
        <taxon>Fungi</taxon>
        <taxon>Dikarya</taxon>
        <taxon>Ascomycota</taxon>
        <taxon>Taphrinomycotina</taxon>
        <taxon>Schizosaccharomycetes</taxon>
        <taxon>Schizosaccharomycetales</taxon>
        <taxon>Schizosaccharomycetaceae</taxon>
        <taxon>Schizosaccharomyces</taxon>
    </lineage>
</organism>
<sequence>MERRKATVHVGNLAPSVTESLLYNAFIPFGEIISVALHRKEKAVDRSYAFVEFDEPEDAKEAMENMNYSILCDRCIRVSPANFALSAEETAVPDIAMLHPESADFQTFKSTSTPTS</sequence>
<dbReference type="EMBL" id="CU329671">
    <property type="protein sequence ID" value="CAA22287.2"/>
    <property type="molecule type" value="Genomic_DNA"/>
</dbReference>
<dbReference type="PIR" id="T40464">
    <property type="entry name" value="T40464"/>
</dbReference>
<dbReference type="RefSeq" id="NP_595190.1">
    <property type="nucleotide sequence ID" value="NM_001021097.2"/>
</dbReference>
<dbReference type="SMR" id="O94359"/>
<dbReference type="BioGRID" id="277369">
    <property type="interactions" value="6"/>
</dbReference>
<dbReference type="FunCoup" id="O94359">
    <property type="interactions" value="98"/>
</dbReference>
<dbReference type="STRING" id="284812.O94359"/>
<dbReference type="PaxDb" id="4896-SPBC428.12c.1"/>
<dbReference type="EnsemblFungi" id="SPBC428.12c.1">
    <property type="protein sequence ID" value="SPBC428.12c.1:pep"/>
    <property type="gene ID" value="SPBC428.12c"/>
</dbReference>
<dbReference type="KEGG" id="spo:2540852"/>
<dbReference type="PomBase" id="SPBC428.12c"/>
<dbReference type="VEuPathDB" id="FungiDB:SPBC428.12c"/>
<dbReference type="eggNOG" id="KOG0118">
    <property type="taxonomic scope" value="Eukaryota"/>
</dbReference>
<dbReference type="HOGENOM" id="CLU_012062_28_12_1"/>
<dbReference type="InParanoid" id="O94359"/>
<dbReference type="OMA" id="MQPVWAD"/>
<dbReference type="PhylomeDB" id="O94359"/>
<dbReference type="PRO" id="PR:O94359"/>
<dbReference type="Proteomes" id="UP000002485">
    <property type="component" value="Chromosome II"/>
</dbReference>
<dbReference type="GO" id="GO:0005829">
    <property type="term" value="C:cytosol"/>
    <property type="evidence" value="ECO:0007005"/>
    <property type="project" value="PomBase"/>
</dbReference>
<dbReference type="GO" id="GO:0005634">
    <property type="term" value="C:nucleus"/>
    <property type="evidence" value="ECO:0007005"/>
    <property type="project" value="PomBase"/>
</dbReference>
<dbReference type="GO" id="GO:0003723">
    <property type="term" value="F:RNA binding"/>
    <property type="evidence" value="ECO:0000303"/>
    <property type="project" value="PomBase"/>
</dbReference>
<dbReference type="GO" id="GO:0045292">
    <property type="term" value="P:mRNA cis splicing, via spliceosome"/>
    <property type="evidence" value="ECO:0000269"/>
    <property type="project" value="PomBase"/>
</dbReference>
<dbReference type="CDD" id="cd12347">
    <property type="entry name" value="RRM_PPIE"/>
    <property type="match status" value="1"/>
</dbReference>
<dbReference type="Gene3D" id="3.30.70.330">
    <property type="match status" value="1"/>
</dbReference>
<dbReference type="InterPro" id="IPR012677">
    <property type="entry name" value="Nucleotide-bd_a/b_plait_sf"/>
</dbReference>
<dbReference type="InterPro" id="IPR034168">
    <property type="entry name" value="PPIE_RRM"/>
</dbReference>
<dbReference type="InterPro" id="IPR035979">
    <property type="entry name" value="RBD_domain_sf"/>
</dbReference>
<dbReference type="InterPro" id="IPR000504">
    <property type="entry name" value="RRM_dom"/>
</dbReference>
<dbReference type="PANTHER" id="PTHR48037">
    <property type="entry name" value="ATPASE E1"/>
    <property type="match status" value="1"/>
</dbReference>
<dbReference type="PANTHER" id="PTHR48037:SF1">
    <property type="entry name" value="RRM DOMAIN-CONTAINING PROTEIN"/>
    <property type="match status" value="1"/>
</dbReference>
<dbReference type="Pfam" id="PF00076">
    <property type="entry name" value="RRM_1"/>
    <property type="match status" value="1"/>
</dbReference>
<dbReference type="SMART" id="SM00360">
    <property type="entry name" value="RRM"/>
    <property type="match status" value="1"/>
</dbReference>
<dbReference type="SUPFAM" id="SSF54928">
    <property type="entry name" value="RNA-binding domain, RBD"/>
    <property type="match status" value="1"/>
</dbReference>
<dbReference type="PROSITE" id="PS50102">
    <property type="entry name" value="RRM"/>
    <property type="match status" value="1"/>
</dbReference>
<accession>O94359</accession>
<keyword id="KW-0963">Cytoplasm</keyword>
<keyword id="KW-0539">Nucleus</keyword>
<keyword id="KW-1185">Reference proteome</keyword>
<keyword id="KW-0694">RNA-binding</keyword>
<evidence type="ECO:0000255" key="1">
    <source>
        <dbReference type="PROSITE-ProRule" id="PRU00176"/>
    </source>
</evidence>
<evidence type="ECO:0000269" key="2">
    <source>
    </source>
</evidence>
<protein>
    <recommendedName>
        <fullName>Uncharacterized RNA-binding protein C428.12c</fullName>
    </recommendedName>
</protein>
<reference key="1">
    <citation type="journal article" date="2002" name="Nature">
        <title>The genome sequence of Schizosaccharomyces pombe.</title>
        <authorList>
            <person name="Wood V."/>
            <person name="Gwilliam R."/>
            <person name="Rajandream M.A."/>
            <person name="Lyne M.H."/>
            <person name="Lyne R."/>
            <person name="Stewart A."/>
            <person name="Sgouros J.G."/>
            <person name="Peat N."/>
            <person name="Hayles J."/>
            <person name="Baker S.G."/>
            <person name="Basham D."/>
            <person name="Bowman S."/>
            <person name="Brooks K."/>
            <person name="Brown D."/>
            <person name="Brown S."/>
            <person name="Chillingworth T."/>
            <person name="Churcher C.M."/>
            <person name="Collins M."/>
            <person name="Connor R."/>
            <person name="Cronin A."/>
            <person name="Davis P."/>
            <person name="Feltwell T."/>
            <person name="Fraser A."/>
            <person name="Gentles S."/>
            <person name="Goble A."/>
            <person name="Hamlin N."/>
            <person name="Harris D.E."/>
            <person name="Hidalgo J."/>
            <person name="Hodgson G."/>
            <person name="Holroyd S."/>
            <person name="Hornsby T."/>
            <person name="Howarth S."/>
            <person name="Huckle E.J."/>
            <person name="Hunt S."/>
            <person name="Jagels K."/>
            <person name="James K.D."/>
            <person name="Jones L."/>
            <person name="Jones M."/>
            <person name="Leather S."/>
            <person name="McDonald S."/>
            <person name="McLean J."/>
            <person name="Mooney P."/>
            <person name="Moule S."/>
            <person name="Mungall K.L."/>
            <person name="Murphy L.D."/>
            <person name="Niblett D."/>
            <person name="Odell C."/>
            <person name="Oliver K."/>
            <person name="O'Neil S."/>
            <person name="Pearson D."/>
            <person name="Quail M.A."/>
            <person name="Rabbinowitsch E."/>
            <person name="Rutherford K.M."/>
            <person name="Rutter S."/>
            <person name="Saunders D."/>
            <person name="Seeger K."/>
            <person name="Sharp S."/>
            <person name="Skelton J."/>
            <person name="Simmonds M.N."/>
            <person name="Squares R."/>
            <person name="Squares S."/>
            <person name="Stevens K."/>
            <person name="Taylor K."/>
            <person name="Taylor R.G."/>
            <person name="Tivey A."/>
            <person name="Walsh S.V."/>
            <person name="Warren T."/>
            <person name="Whitehead S."/>
            <person name="Woodward J.R."/>
            <person name="Volckaert G."/>
            <person name="Aert R."/>
            <person name="Robben J."/>
            <person name="Grymonprez B."/>
            <person name="Weltjens I."/>
            <person name="Vanstreels E."/>
            <person name="Rieger M."/>
            <person name="Schaefer M."/>
            <person name="Mueller-Auer S."/>
            <person name="Gabel C."/>
            <person name="Fuchs M."/>
            <person name="Duesterhoeft A."/>
            <person name="Fritzc C."/>
            <person name="Holzer E."/>
            <person name="Moestl D."/>
            <person name="Hilbert H."/>
            <person name="Borzym K."/>
            <person name="Langer I."/>
            <person name="Beck A."/>
            <person name="Lehrach H."/>
            <person name="Reinhardt R."/>
            <person name="Pohl T.M."/>
            <person name="Eger P."/>
            <person name="Zimmermann W."/>
            <person name="Wedler H."/>
            <person name="Wambutt R."/>
            <person name="Purnelle B."/>
            <person name="Goffeau A."/>
            <person name="Cadieu E."/>
            <person name="Dreano S."/>
            <person name="Gloux S."/>
            <person name="Lelaure V."/>
            <person name="Mottier S."/>
            <person name="Galibert F."/>
            <person name="Aves S.J."/>
            <person name="Xiang Z."/>
            <person name="Hunt C."/>
            <person name="Moore K."/>
            <person name="Hurst S.M."/>
            <person name="Lucas M."/>
            <person name="Rochet M."/>
            <person name="Gaillardin C."/>
            <person name="Tallada V.A."/>
            <person name="Garzon A."/>
            <person name="Thode G."/>
            <person name="Daga R.R."/>
            <person name="Cruzado L."/>
            <person name="Jimenez J."/>
            <person name="Sanchez M."/>
            <person name="del Rey F."/>
            <person name="Benito J."/>
            <person name="Dominguez A."/>
            <person name="Revuelta J.L."/>
            <person name="Moreno S."/>
            <person name="Armstrong J."/>
            <person name="Forsburg S.L."/>
            <person name="Cerutti L."/>
            <person name="Lowe T."/>
            <person name="McCombie W.R."/>
            <person name="Paulsen I."/>
            <person name="Potashkin J."/>
            <person name="Shpakovski G.V."/>
            <person name="Ussery D."/>
            <person name="Barrell B.G."/>
            <person name="Nurse P."/>
        </authorList>
    </citation>
    <scope>NUCLEOTIDE SEQUENCE [LARGE SCALE GENOMIC DNA]</scope>
    <source>
        <strain>972 / ATCC 24843</strain>
    </source>
</reference>
<reference key="2">
    <citation type="journal article" date="2006" name="Nat. Biotechnol.">
        <title>ORFeome cloning and global analysis of protein localization in the fission yeast Schizosaccharomyces pombe.</title>
        <authorList>
            <person name="Matsuyama A."/>
            <person name="Arai R."/>
            <person name="Yashiroda Y."/>
            <person name="Shirai A."/>
            <person name="Kamata A."/>
            <person name="Sekido S."/>
            <person name="Kobayashi Y."/>
            <person name="Hashimoto A."/>
            <person name="Hamamoto M."/>
            <person name="Hiraoka Y."/>
            <person name="Horinouchi S."/>
            <person name="Yoshida M."/>
        </authorList>
    </citation>
    <scope>SUBCELLULAR LOCATION [LARGE SCALE ANALYSIS]</scope>
</reference>
<feature type="chain" id="PRO_0000310813" description="Uncharacterized RNA-binding protein C428.12c">
    <location>
        <begin position="1"/>
        <end position="116"/>
    </location>
</feature>
<feature type="domain" description="RRM" evidence="1">
    <location>
        <begin position="6"/>
        <end position="83"/>
    </location>
</feature>